<gene>
    <name type="ordered locus">VC_A1059</name>
</gene>
<organism>
    <name type="scientific">Vibrio cholerae serotype O1 (strain ATCC 39315 / El Tor Inaba N16961)</name>
    <dbReference type="NCBI Taxonomy" id="243277"/>
    <lineage>
        <taxon>Bacteria</taxon>
        <taxon>Pseudomonadati</taxon>
        <taxon>Pseudomonadota</taxon>
        <taxon>Gammaproteobacteria</taxon>
        <taxon>Vibrionales</taxon>
        <taxon>Vibrionaceae</taxon>
        <taxon>Vibrio</taxon>
    </lineage>
</organism>
<protein>
    <recommendedName>
        <fullName evidence="1">Putative pseudouridine methyltransferase</fullName>
        <ecNumber evidence="1">2.1.1.-</ecNumber>
    </recommendedName>
</protein>
<reference key="1">
    <citation type="journal article" date="2000" name="Nature">
        <title>DNA sequence of both chromosomes of the cholera pathogen Vibrio cholerae.</title>
        <authorList>
            <person name="Heidelberg J.F."/>
            <person name="Eisen J.A."/>
            <person name="Nelson W.C."/>
            <person name="Clayton R.A."/>
            <person name="Gwinn M.L."/>
            <person name="Dodson R.J."/>
            <person name="Haft D.H."/>
            <person name="Hickey E.K."/>
            <person name="Peterson J.D."/>
            <person name="Umayam L.A."/>
            <person name="Gill S.R."/>
            <person name="Nelson K.E."/>
            <person name="Read T.D."/>
            <person name="Tettelin H."/>
            <person name="Richardson D.L."/>
            <person name="Ermolaeva M.D."/>
            <person name="Vamathevan J.J."/>
            <person name="Bass S."/>
            <person name="Qin H."/>
            <person name="Dragoi I."/>
            <person name="Sellers P."/>
            <person name="McDonald L.A."/>
            <person name="Utterback T.R."/>
            <person name="Fleischmann R.D."/>
            <person name="Nierman W.C."/>
            <person name="White O."/>
            <person name="Salzberg S.L."/>
            <person name="Smith H.O."/>
            <person name="Colwell R.R."/>
            <person name="Mekalanos J.J."/>
            <person name="Venter J.C."/>
            <person name="Fraser C.M."/>
        </authorList>
    </citation>
    <scope>NUCLEOTIDE SEQUENCE [LARGE SCALE GENOMIC DNA]</scope>
    <source>
        <strain>ATCC 39315 / El Tor Inaba N16961</strain>
    </source>
</reference>
<reference key="2">
    <citation type="submission" date="2009-02" db="PDB data bank">
        <title>Crystal structure of unknown function protein VCA1059.</title>
        <authorList>
            <consortium name="Midwest center for structural genomics (MCSG)"/>
        </authorList>
    </citation>
    <scope>X-RAY CRYSTALLOGRAPHY (2.6 ANGSTROMS)</scope>
</reference>
<evidence type="ECO:0000255" key="1">
    <source>
        <dbReference type="HAMAP-Rule" id="MF_00587"/>
    </source>
</evidence>
<evidence type="ECO:0000305" key="2"/>
<evidence type="ECO:0007829" key="3">
    <source>
        <dbReference type="PDB" id="2QWV"/>
    </source>
</evidence>
<feature type="chain" id="PRO_0000157956" description="Putative pseudouridine methyltransferase">
    <location>
        <begin position="1"/>
        <end position="201"/>
    </location>
</feature>
<feature type="binding site" evidence="1">
    <location>
        <position position="132"/>
    </location>
    <ligand>
        <name>S-adenosyl-L-methionine</name>
        <dbReference type="ChEBI" id="CHEBI:59789"/>
    </ligand>
</feature>
<feature type="binding site" evidence="1">
    <location>
        <position position="186"/>
    </location>
    <ligand>
        <name>S-adenosyl-L-methionine</name>
        <dbReference type="ChEBI" id="CHEBI:59789"/>
    </ligand>
</feature>
<feature type="strand" evidence="3">
    <location>
        <begin position="2"/>
        <end position="14"/>
    </location>
</feature>
<feature type="helix" evidence="3">
    <location>
        <begin position="15"/>
        <end position="20"/>
    </location>
</feature>
<feature type="turn" evidence="3">
    <location>
        <begin position="21"/>
        <end position="23"/>
    </location>
</feature>
<feature type="strand" evidence="3">
    <location>
        <begin position="24"/>
        <end position="26"/>
    </location>
</feature>
<feature type="helix" evidence="3">
    <location>
        <begin position="29"/>
        <end position="39"/>
    </location>
</feature>
<feature type="strand" evidence="3">
    <location>
        <begin position="42"/>
        <end position="45"/>
    </location>
</feature>
<feature type="strand" evidence="3">
    <location>
        <begin position="47"/>
        <end position="57"/>
    </location>
</feature>
<feature type="strand" evidence="3">
    <location>
        <begin position="59"/>
        <end position="61"/>
    </location>
</feature>
<feature type="strand" evidence="3">
    <location>
        <begin position="63"/>
        <end position="68"/>
    </location>
</feature>
<feature type="turn" evidence="3">
    <location>
        <begin position="69"/>
        <end position="71"/>
    </location>
</feature>
<feature type="helix" evidence="3">
    <location>
        <begin position="80"/>
        <end position="93"/>
    </location>
</feature>
<feature type="turn" evidence="3">
    <location>
        <begin position="94"/>
        <end position="96"/>
    </location>
</feature>
<feature type="strand" evidence="3">
    <location>
        <begin position="102"/>
        <end position="106"/>
    </location>
</feature>
<feature type="strand" evidence="3">
    <location>
        <begin position="109"/>
        <end position="112"/>
    </location>
</feature>
<feature type="helix" evidence="3">
    <location>
        <begin position="116"/>
        <end position="124"/>
    </location>
</feature>
<feature type="strand" evidence="3">
    <location>
        <begin position="127"/>
        <end position="132"/>
    </location>
</feature>
<feature type="strand" evidence="3">
    <location>
        <begin position="136"/>
        <end position="138"/>
    </location>
</feature>
<feature type="turn" evidence="3">
    <location>
        <begin position="139"/>
        <end position="141"/>
    </location>
</feature>
<feature type="strand" evidence="3">
    <location>
        <begin position="146"/>
        <end position="152"/>
    </location>
</feature>
<feature type="turn" evidence="3">
    <location>
        <begin position="166"/>
        <end position="170"/>
    </location>
</feature>
<feature type="strand" evidence="3">
    <location>
        <begin position="172"/>
        <end position="175"/>
    </location>
</feature>
<feature type="helix" evidence="3">
    <location>
        <begin position="183"/>
        <end position="199"/>
    </location>
</feature>
<dbReference type="EC" id="2.1.1.-" evidence="1"/>
<dbReference type="EMBL" id="AE003853">
    <property type="protein sequence ID" value="AAF96953.1"/>
    <property type="status" value="ALT_INIT"/>
    <property type="molecule type" value="Genomic_DNA"/>
</dbReference>
<dbReference type="PIR" id="A82384">
    <property type="entry name" value="A82384"/>
</dbReference>
<dbReference type="RefSeq" id="NP_233441.1">
    <property type="nucleotide sequence ID" value="NC_002506.1"/>
</dbReference>
<dbReference type="PDB" id="2QWV">
    <property type="method" value="X-ray"/>
    <property type="resolution" value="2.60 A"/>
    <property type="chains" value="A/B=1-201"/>
</dbReference>
<dbReference type="PDBsum" id="2QWV"/>
<dbReference type="SMR" id="Q9KKP3"/>
<dbReference type="STRING" id="243277.VC_A1059"/>
<dbReference type="DNASU" id="2612057"/>
<dbReference type="EnsemblBacteria" id="AAF96953">
    <property type="protein sequence ID" value="AAF96953"/>
    <property type="gene ID" value="VC_A1059"/>
</dbReference>
<dbReference type="KEGG" id="vch:VC_A1059"/>
<dbReference type="PATRIC" id="fig|243277.26.peg.3665"/>
<dbReference type="eggNOG" id="COG1901">
    <property type="taxonomic scope" value="Bacteria"/>
</dbReference>
<dbReference type="HOGENOM" id="CLU_107018_0_0_6"/>
<dbReference type="EvolutionaryTrace" id="Q9KKP3"/>
<dbReference type="Proteomes" id="UP000000584">
    <property type="component" value="Chromosome 2"/>
</dbReference>
<dbReference type="GO" id="GO:0005737">
    <property type="term" value="C:cytoplasm"/>
    <property type="evidence" value="ECO:0007669"/>
    <property type="project" value="UniProtKB-SubCell"/>
</dbReference>
<dbReference type="GO" id="GO:0008757">
    <property type="term" value="F:S-adenosylmethionine-dependent methyltransferase activity"/>
    <property type="evidence" value="ECO:0000318"/>
    <property type="project" value="GO_Central"/>
</dbReference>
<dbReference type="GO" id="GO:0008175">
    <property type="term" value="F:tRNA methyltransferase activity"/>
    <property type="evidence" value="ECO:0000318"/>
    <property type="project" value="GO_Central"/>
</dbReference>
<dbReference type="GO" id="GO:0030488">
    <property type="term" value="P:tRNA methylation"/>
    <property type="evidence" value="ECO:0000318"/>
    <property type="project" value="GO_Central"/>
</dbReference>
<dbReference type="CDD" id="cd18087">
    <property type="entry name" value="TrmY-like"/>
    <property type="match status" value="1"/>
</dbReference>
<dbReference type="Gene3D" id="3.40.1280.10">
    <property type="match status" value="1"/>
</dbReference>
<dbReference type="HAMAP" id="MF_00587">
    <property type="entry name" value="tRNA_methyltr_TrmY"/>
    <property type="match status" value="1"/>
</dbReference>
<dbReference type="InterPro" id="IPR029028">
    <property type="entry name" value="Alpha/beta_knot_MTases"/>
</dbReference>
<dbReference type="InterPro" id="IPR007158">
    <property type="entry name" value="TrmY"/>
</dbReference>
<dbReference type="InterPro" id="IPR029026">
    <property type="entry name" value="tRNA_m1G_MTases_N"/>
</dbReference>
<dbReference type="NCBIfam" id="NF002560">
    <property type="entry name" value="PRK02135.1"/>
    <property type="match status" value="1"/>
</dbReference>
<dbReference type="PANTHER" id="PTHR40703">
    <property type="entry name" value="TRNA (PSEUDOURIDINE(54)-N(1))-METHYLTRANSFERASE"/>
    <property type="match status" value="1"/>
</dbReference>
<dbReference type="PANTHER" id="PTHR40703:SF1">
    <property type="entry name" value="TRNA (PSEUDOURIDINE(54)-N(1))-METHYLTRANSFERASE"/>
    <property type="match status" value="1"/>
</dbReference>
<dbReference type="Pfam" id="PF04013">
    <property type="entry name" value="Methyltrn_RNA_2"/>
    <property type="match status" value="1"/>
</dbReference>
<dbReference type="SUPFAM" id="SSF75217">
    <property type="entry name" value="alpha/beta knot"/>
    <property type="match status" value="1"/>
</dbReference>
<name>TRMYL_VIBCH</name>
<proteinExistence type="evidence at protein level"/>
<keyword id="KW-0002">3D-structure</keyword>
<keyword id="KW-0963">Cytoplasm</keyword>
<keyword id="KW-0489">Methyltransferase</keyword>
<keyword id="KW-1185">Reference proteome</keyword>
<keyword id="KW-0949">S-adenosyl-L-methionine</keyword>
<keyword id="KW-0808">Transferase</keyword>
<sequence length="201" mass="22275">MRSFILRARSAPTDSQRLLDEIGGKCHTEILAHCMMNSLFTAQSHREDVVIHLVLESTRDYSRTITVEANEISDVGGFHEAALIALLVKALDASVGMGKEQTRVVQPGLTVRTISFEALLGELAEHHSLYMMDKKGDSIRDIKIGPNPCFILTDHIPMPKKSGNSMKRLGVEKISLGPKMLFASQCVTLIHNEIDHQEAGW</sequence>
<accession>Q9KKP3</accession>
<comment type="subcellular location">
    <subcellularLocation>
        <location evidence="1">Cytoplasm</location>
    </subcellularLocation>
</comment>
<comment type="similarity">
    <text evidence="1">Belongs to the methyltransferase superfamily. TrmY family.</text>
</comment>
<comment type="sequence caution" evidence="2">
    <conflict type="erroneous initiation">
        <sequence resource="EMBL-CDS" id="AAF96953"/>
    </conflict>
</comment>